<reference key="1">
    <citation type="journal article" date="2009" name="BMC Genomics">
        <title>Metabolic analysis of the soil microbe Dechloromonas aromatica str. RCB: indications of a surprisingly complex life-style and cryptic anaerobic pathways for aromatic degradation.</title>
        <authorList>
            <person name="Salinero K.K."/>
            <person name="Keller K."/>
            <person name="Feil W.S."/>
            <person name="Feil H."/>
            <person name="Trong S."/>
            <person name="Di Bartolo G."/>
            <person name="Lapidus A."/>
        </authorList>
    </citation>
    <scope>NUCLEOTIDE SEQUENCE [LARGE SCALE GENOMIC DNA]</scope>
    <source>
        <strain>RCB</strain>
    </source>
</reference>
<proteinExistence type="inferred from homology"/>
<gene>
    <name type="ordered locus">Daro_3893</name>
</gene>
<protein>
    <recommendedName>
        <fullName evidence="1">UPF0301 protein Daro_3893</fullName>
    </recommendedName>
</protein>
<comment type="similarity">
    <text evidence="1">Belongs to the UPF0301 (AlgH) family.</text>
</comment>
<evidence type="ECO:0000255" key="1">
    <source>
        <dbReference type="HAMAP-Rule" id="MF_00758"/>
    </source>
</evidence>
<organism>
    <name type="scientific">Dechloromonas aromatica (strain RCB)</name>
    <dbReference type="NCBI Taxonomy" id="159087"/>
    <lineage>
        <taxon>Bacteria</taxon>
        <taxon>Pseudomonadati</taxon>
        <taxon>Pseudomonadota</taxon>
        <taxon>Betaproteobacteria</taxon>
        <taxon>Rhodocyclales</taxon>
        <taxon>Azonexaceae</taxon>
        <taxon>Dechloromonas</taxon>
    </lineage>
</organism>
<dbReference type="EMBL" id="CP000089">
    <property type="protein sequence ID" value="AAZ48621.1"/>
    <property type="molecule type" value="Genomic_DNA"/>
</dbReference>
<dbReference type="SMR" id="Q478W0"/>
<dbReference type="STRING" id="159087.Daro_3893"/>
<dbReference type="KEGG" id="dar:Daro_3893"/>
<dbReference type="eggNOG" id="COG1678">
    <property type="taxonomic scope" value="Bacteria"/>
</dbReference>
<dbReference type="HOGENOM" id="CLU_057596_1_0_4"/>
<dbReference type="OrthoDB" id="9807486at2"/>
<dbReference type="GO" id="GO:0005829">
    <property type="term" value="C:cytosol"/>
    <property type="evidence" value="ECO:0007669"/>
    <property type="project" value="TreeGrafter"/>
</dbReference>
<dbReference type="Gene3D" id="3.40.1740.10">
    <property type="entry name" value="VC0467-like"/>
    <property type="match status" value="1"/>
</dbReference>
<dbReference type="HAMAP" id="MF_00758">
    <property type="entry name" value="UPF0301"/>
    <property type="match status" value="1"/>
</dbReference>
<dbReference type="InterPro" id="IPR003774">
    <property type="entry name" value="AlgH-like"/>
</dbReference>
<dbReference type="NCBIfam" id="NF001266">
    <property type="entry name" value="PRK00228.1-1"/>
    <property type="match status" value="1"/>
</dbReference>
<dbReference type="PANTHER" id="PTHR30327">
    <property type="entry name" value="UNCHARACTERIZED PROTEIN YQGE"/>
    <property type="match status" value="1"/>
</dbReference>
<dbReference type="PANTHER" id="PTHR30327:SF1">
    <property type="entry name" value="UPF0301 PROTEIN YQGE"/>
    <property type="match status" value="1"/>
</dbReference>
<dbReference type="Pfam" id="PF02622">
    <property type="entry name" value="DUF179"/>
    <property type="match status" value="1"/>
</dbReference>
<dbReference type="SUPFAM" id="SSF143456">
    <property type="entry name" value="VC0467-like"/>
    <property type="match status" value="1"/>
</dbReference>
<name>Y3893_DECAR</name>
<accession>Q478W0</accession>
<feature type="chain" id="PRO_0000258821" description="UPF0301 protein Daro_3893">
    <location>
        <begin position="1"/>
        <end position="186"/>
    </location>
</feature>
<sequence>MDNVNLTDNFLIAMPTLEDPYFSNALVYICEHNENGALGIIVNRPIDMNLASLLEKIDIKLEAENLADMPVYFGGPVQLDRGFVLHRPIGQWQSTLAINSDVGLTSSRDVLSSVGSAGLPAEILVTLGYAGWDAGQLEEELAQNSWLTVPAKASILFDLPPEERLPAAMQKLGISFTQLSDVAGHA</sequence>